<evidence type="ECO:0000250" key="1">
    <source>
        <dbReference type="UniProtKB" id="P45543"/>
    </source>
</evidence>
<evidence type="ECO:0000305" key="2"/>
<protein>
    <recommendedName>
        <fullName evidence="1">Fructoselysine 6-kinase</fullName>
        <ecNumber evidence="1">2.7.1.218</ecNumber>
    </recommendedName>
</protein>
<name>FRLD_SHIFL</name>
<sequence length="261" mass="28320">MKTLATIGDNCVDIYPQLNKAFSGGNAVNVAVYCTRYGIQPGCITWVGDDDYGTKLKQDLARMGVDISHVHTKHGVTAQTQVELHDNDRVFGDYTEGVMADFALSEEDYAWLAQYDIVHAAIWGHAEDAFPQLHAAGKLTAFDFSDKWDSPLWQTLVPHLDFAFASAPQEDEALRLKMKAIVARGAGTVIVTLGENGSIAWDGAQFWRQAPEPVTVIDTMGAGDSFIAGFLCGWSAGMTLPQAMAQGTACAAKTIQYHGAW</sequence>
<reference key="1">
    <citation type="journal article" date="2002" name="Nucleic Acids Res.">
        <title>Genome sequence of Shigella flexneri 2a: insights into pathogenicity through comparison with genomes of Escherichia coli K12 and O157.</title>
        <authorList>
            <person name="Jin Q."/>
            <person name="Yuan Z."/>
            <person name="Xu J."/>
            <person name="Wang Y."/>
            <person name="Shen Y."/>
            <person name="Lu W."/>
            <person name="Wang J."/>
            <person name="Liu H."/>
            <person name="Yang J."/>
            <person name="Yang F."/>
            <person name="Zhang X."/>
            <person name="Zhang J."/>
            <person name="Yang G."/>
            <person name="Wu H."/>
            <person name="Qu D."/>
            <person name="Dong J."/>
            <person name="Sun L."/>
            <person name="Xue Y."/>
            <person name="Zhao A."/>
            <person name="Gao Y."/>
            <person name="Zhu J."/>
            <person name="Kan B."/>
            <person name="Ding K."/>
            <person name="Chen S."/>
            <person name="Cheng H."/>
            <person name="Yao Z."/>
            <person name="He B."/>
            <person name="Chen R."/>
            <person name="Ma D."/>
            <person name="Qiang B."/>
            <person name="Wen Y."/>
            <person name="Hou Y."/>
            <person name="Yu J."/>
        </authorList>
    </citation>
    <scope>NUCLEOTIDE SEQUENCE [LARGE SCALE GENOMIC DNA]</scope>
    <source>
        <strain>301 / Serotype 2a</strain>
    </source>
</reference>
<reference key="2">
    <citation type="journal article" date="2003" name="Infect. Immun.">
        <title>Complete genome sequence and comparative genomics of Shigella flexneri serotype 2a strain 2457T.</title>
        <authorList>
            <person name="Wei J."/>
            <person name="Goldberg M.B."/>
            <person name="Burland V."/>
            <person name="Venkatesan M.M."/>
            <person name="Deng W."/>
            <person name="Fournier G."/>
            <person name="Mayhew G.F."/>
            <person name="Plunkett G. III"/>
            <person name="Rose D.J."/>
            <person name="Darling A."/>
            <person name="Mau B."/>
            <person name="Perna N.T."/>
            <person name="Payne S.M."/>
            <person name="Runyen-Janecky L.J."/>
            <person name="Zhou S."/>
            <person name="Schwartz D.C."/>
            <person name="Blattner F.R."/>
        </authorList>
    </citation>
    <scope>NUCLEOTIDE SEQUENCE [LARGE SCALE GENOMIC DNA]</scope>
    <source>
        <strain>ATCC 700930 / 2457T / Serotype 2a</strain>
    </source>
</reference>
<keyword id="KW-0067">ATP-binding</keyword>
<keyword id="KW-0418">Kinase</keyword>
<keyword id="KW-0547">Nucleotide-binding</keyword>
<keyword id="KW-1185">Reference proteome</keyword>
<keyword id="KW-0808">Transferase</keyword>
<proteinExistence type="inferred from homology"/>
<feature type="chain" id="PRO_0000080067" description="Fructoselysine 6-kinase">
    <location>
        <begin position="1"/>
        <end position="261"/>
    </location>
</feature>
<accession>Q83JB1</accession>
<gene>
    <name type="primary">frlD</name>
    <name type="ordered locus">SF3392</name>
    <name type="ordered locus">S4370</name>
</gene>
<organism>
    <name type="scientific">Shigella flexneri</name>
    <dbReference type="NCBI Taxonomy" id="623"/>
    <lineage>
        <taxon>Bacteria</taxon>
        <taxon>Pseudomonadati</taxon>
        <taxon>Pseudomonadota</taxon>
        <taxon>Gammaproteobacteria</taxon>
        <taxon>Enterobacterales</taxon>
        <taxon>Enterobacteriaceae</taxon>
        <taxon>Shigella</taxon>
    </lineage>
</organism>
<comment type="function">
    <text evidence="1">Catalyzes the ATP-dependent phosphorylation of fructoselysine to fructoselysine 6-phosphate. May function in a fructoselysine degradation pathway that allows S.flexneri to grow on fructoselysine or psicoselysine.</text>
</comment>
<comment type="catalytic activity">
    <reaction evidence="1">
        <text>N(6)-(D-fructosyl)-L-lysine + ATP = N(6)-(6-phospho-D-fructosyl)-L-lysine + ADP + H(+)</text>
        <dbReference type="Rhea" id="RHEA:28378"/>
        <dbReference type="ChEBI" id="CHEBI:15378"/>
        <dbReference type="ChEBI" id="CHEBI:30616"/>
        <dbReference type="ChEBI" id="CHEBI:61392"/>
        <dbReference type="ChEBI" id="CHEBI:61393"/>
        <dbReference type="ChEBI" id="CHEBI:456216"/>
        <dbReference type="EC" id="2.7.1.218"/>
    </reaction>
</comment>
<comment type="pathway">
    <text evidence="1">Carbohydrate metabolism; fructoselysine degradation; D-glucose 6-phosphate and lysine from fructoselysine: step 1/2.</text>
</comment>
<comment type="subunit">
    <text evidence="1">Monomer.</text>
</comment>
<comment type="similarity">
    <text evidence="2">Belongs to the carbohydrate kinase PfkB family.</text>
</comment>
<dbReference type="EC" id="2.7.1.218" evidence="1"/>
<dbReference type="EMBL" id="AE005674">
    <property type="protein sequence ID" value="AAN44854.1"/>
    <property type="molecule type" value="Genomic_DNA"/>
</dbReference>
<dbReference type="EMBL" id="AE014073">
    <property type="protein sequence ID" value="AAP19324.1"/>
    <property type="molecule type" value="Genomic_DNA"/>
</dbReference>
<dbReference type="RefSeq" id="WP_000853346.1">
    <property type="nucleotide sequence ID" value="NZ_WPGW01000003.1"/>
</dbReference>
<dbReference type="SMR" id="Q83JB1"/>
<dbReference type="STRING" id="198214.SF3392"/>
<dbReference type="PaxDb" id="198214-SF3392"/>
<dbReference type="DNASU" id="1080578"/>
<dbReference type="KEGG" id="sfl:SF3392"/>
<dbReference type="KEGG" id="sfx:S4370"/>
<dbReference type="PATRIC" id="fig|198214.7.peg.4005"/>
<dbReference type="HOGENOM" id="CLU_027634_13_0_6"/>
<dbReference type="UniPathway" id="UPA00784">
    <property type="reaction ID" value="UER00769"/>
</dbReference>
<dbReference type="Proteomes" id="UP000001006">
    <property type="component" value="Chromosome"/>
</dbReference>
<dbReference type="Proteomes" id="UP000002673">
    <property type="component" value="Chromosome"/>
</dbReference>
<dbReference type="GO" id="GO:0005524">
    <property type="term" value="F:ATP binding"/>
    <property type="evidence" value="ECO:0007669"/>
    <property type="project" value="UniProtKB-KW"/>
</dbReference>
<dbReference type="GO" id="GO:0016301">
    <property type="term" value="F:kinase activity"/>
    <property type="evidence" value="ECO:0007669"/>
    <property type="project" value="UniProtKB-KW"/>
</dbReference>
<dbReference type="CDD" id="cd01940">
    <property type="entry name" value="Fructoselysine_kinase_like"/>
    <property type="match status" value="1"/>
</dbReference>
<dbReference type="FunFam" id="3.40.1190.20:FF:000030">
    <property type="entry name" value="Kinase, PfkB family"/>
    <property type="match status" value="1"/>
</dbReference>
<dbReference type="Gene3D" id="3.40.1190.20">
    <property type="match status" value="1"/>
</dbReference>
<dbReference type="InterPro" id="IPR052700">
    <property type="entry name" value="Carb_kinase_PfkB-like"/>
</dbReference>
<dbReference type="InterPro" id="IPR002173">
    <property type="entry name" value="Carboh/pur_kinase_PfkB_CS"/>
</dbReference>
<dbReference type="InterPro" id="IPR011611">
    <property type="entry name" value="PfkB_dom"/>
</dbReference>
<dbReference type="InterPro" id="IPR029056">
    <property type="entry name" value="Ribokinase-like"/>
</dbReference>
<dbReference type="NCBIfam" id="NF007321">
    <property type="entry name" value="PRK09813.1"/>
    <property type="match status" value="1"/>
</dbReference>
<dbReference type="PANTHER" id="PTHR43320:SF3">
    <property type="entry name" value="CARBOHYDRATE KINASE PFKB DOMAIN-CONTAINING PROTEIN"/>
    <property type="match status" value="1"/>
</dbReference>
<dbReference type="PANTHER" id="PTHR43320">
    <property type="entry name" value="SUGAR KINASE"/>
    <property type="match status" value="1"/>
</dbReference>
<dbReference type="Pfam" id="PF00294">
    <property type="entry name" value="PfkB"/>
    <property type="match status" value="1"/>
</dbReference>
<dbReference type="SUPFAM" id="SSF53613">
    <property type="entry name" value="Ribokinase-like"/>
    <property type="match status" value="1"/>
</dbReference>
<dbReference type="PROSITE" id="PS00583">
    <property type="entry name" value="PFKB_KINASES_1"/>
    <property type="match status" value="1"/>
</dbReference>
<dbReference type="PROSITE" id="PS00584">
    <property type="entry name" value="PFKB_KINASES_2"/>
    <property type="match status" value="1"/>
</dbReference>